<reference key="1">
    <citation type="journal article" date="2005" name="Genome Res.">
        <title>Genome sequence of Blochmannia pennsylvanicus indicates parallel evolutionary trends among bacterial mutualists of insects.</title>
        <authorList>
            <person name="Degnan P.H."/>
            <person name="Lazarus A.B."/>
            <person name="Wernegreen J.J."/>
        </authorList>
    </citation>
    <scope>NUCLEOTIDE SEQUENCE [LARGE SCALE GENOMIC DNA]</scope>
    <source>
        <strain>BPEN</strain>
    </source>
</reference>
<sequence length="100" mass="11014">MKLLPREKDKLLLFTAALLAEKRRNRGLKLNYPEAIALISAVILEGAREGKSVAELMDVGKNVLTRDDVMIGVPEMITNVQVEATFSDGTKLVTVHDPII</sequence>
<keyword id="KW-0963">Cytoplasm</keyword>
<keyword id="KW-0378">Hydrolase</keyword>
<keyword id="KW-1185">Reference proteome</keyword>
<comment type="catalytic activity">
    <reaction evidence="1">
        <text>urea + 2 H2O + H(+) = hydrogencarbonate + 2 NH4(+)</text>
        <dbReference type="Rhea" id="RHEA:20557"/>
        <dbReference type="ChEBI" id="CHEBI:15377"/>
        <dbReference type="ChEBI" id="CHEBI:15378"/>
        <dbReference type="ChEBI" id="CHEBI:16199"/>
        <dbReference type="ChEBI" id="CHEBI:17544"/>
        <dbReference type="ChEBI" id="CHEBI:28938"/>
        <dbReference type="EC" id="3.5.1.5"/>
    </reaction>
</comment>
<comment type="pathway">
    <text evidence="1">Nitrogen metabolism; urea degradation; CO(2) and NH(3) from urea (urease route): step 1/1.</text>
</comment>
<comment type="subunit">
    <text evidence="1">Heterotrimer of UreA (gamma), UreB (beta) and UreC (alpha) subunits. Three heterotrimers associate to form the active enzyme.</text>
</comment>
<comment type="subcellular location">
    <subcellularLocation>
        <location evidence="1">Cytoplasm</location>
    </subcellularLocation>
</comment>
<comment type="similarity">
    <text evidence="1">Belongs to the urease gamma subunit family.</text>
</comment>
<gene>
    <name evidence="1" type="primary">ureA</name>
    <name type="ordered locus">BPEN_544</name>
</gene>
<dbReference type="EC" id="3.5.1.5" evidence="1"/>
<dbReference type="EMBL" id="CP000016">
    <property type="protein sequence ID" value="AAZ41154.1"/>
    <property type="molecule type" value="Genomic_DNA"/>
</dbReference>
<dbReference type="RefSeq" id="WP_011283065.1">
    <property type="nucleotide sequence ID" value="NC_007292.1"/>
</dbReference>
<dbReference type="SMR" id="Q492E7"/>
<dbReference type="STRING" id="291272.BPEN_544"/>
<dbReference type="KEGG" id="bpn:BPEN_544"/>
<dbReference type="eggNOG" id="COG0831">
    <property type="taxonomic scope" value="Bacteria"/>
</dbReference>
<dbReference type="HOGENOM" id="CLU_145825_1_0_6"/>
<dbReference type="OrthoDB" id="9797217at2"/>
<dbReference type="UniPathway" id="UPA00258">
    <property type="reaction ID" value="UER00370"/>
</dbReference>
<dbReference type="Proteomes" id="UP000007794">
    <property type="component" value="Chromosome"/>
</dbReference>
<dbReference type="GO" id="GO:0005737">
    <property type="term" value="C:cytoplasm"/>
    <property type="evidence" value="ECO:0007669"/>
    <property type="project" value="UniProtKB-SubCell"/>
</dbReference>
<dbReference type="GO" id="GO:0016151">
    <property type="term" value="F:nickel cation binding"/>
    <property type="evidence" value="ECO:0007669"/>
    <property type="project" value="InterPro"/>
</dbReference>
<dbReference type="GO" id="GO:0009039">
    <property type="term" value="F:urease activity"/>
    <property type="evidence" value="ECO:0007669"/>
    <property type="project" value="UniProtKB-UniRule"/>
</dbReference>
<dbReference type="GO" id="GO:0043419">
    <property type="term" value="P:urea catabolic process"/>
    <property type="evidence" value="ECO:0007669"/>
    <property type="project" value="UniProtKB-UniRule"/>
</dbReference>
<dbReference type="CDD" id="cd00390">
    <property type="entry name" value="Urease_gamma"/>
    <property type="match status" value="1"/>
</dbReference>
<dbReference type="Gene3D" id="3.30.280.10">
    <property type="entry name" value="Urease, gamma-like subunit"/>
    <property type="match status" value="1"/>
</dbReference>
<dbReference type="HAMAP" id="MF_00739">
    <property type="entry name" value="Urease_gamma"/>
    <property type="match status" value="1"/>
</dbReference>
<dbReference type="InterPro" id="IPR012010">
    <property type="entry name" value="Urease_gamma"/>
</dbReference>
<dbReference type="InterPro" id="IPR002026">
    <property type="entry name" value="Urease_gamma/gamma-beta_su"/>
</dbReference>
<dbReference type="InterPro" id="IPR036463">
    <property type="entry name" value="Urease_gamma_sf"/>
</dbReference>
<dbReference type="InterPro" id="IPR050069">
    <property type="entry name" value="Urease_subunit"/>
</dbReference>
<dbReference type="NCBIfam" id="NF009712">
    <property type="entry name" value="PRK13241.1"/>
    <property type="match status" value="1"/>
</dbReference>
<dbReference type="NCBIfam" id="TIGR00193">
    <property type="entry name" value="urease_gam"/>
    <property type="match status" value="1"/>
</dbReference>
<dbReference type="PANTHER" id="PTHR33569">
    <property type="entry name" value="UREASE"/>
    <property type="match status" value="1"/>
</dbReference>
<dbReference type="PANTHER" id="PTHR33569:SF1">
    <property type="entry name" value="UREASE"/>
    <property type="match status" value="1"/>
</dbReference>
<dbReference type="Pfam" id="PF00547">
    <property type="entry name" value="Urease_gamma"/>
    <property type="match status" value="1"/>
</dbReference>
<dbReference type="PIRSF" id="PIRSF001223">
    <property type="entry name" value="Urease_gamma"/>
    <property type="match status" value="1"/>
</dbReference>
<dbReference type="SUPFAM" id="SSF54111">
    <property type="entry name" value="Urease, gamma-subunit"/>
    <property type="match status" value="1"/>
</dbReference>
<protein>
    <recommendedName>
        <fullName evidence="1">Urease subunit gamma</fullName>
        <ecNumber evidence="1">3.5.1.5</ecNumber>
    </recommendedName>
    <alternativeName>
        <fullName evidence="1">Urea amidohydrolase subunit gamma</fullName>
    </alternativeName>
</protein>
<evidence type="ECO:0000255" key="1">
    <source>
        <dbReference type="HAMAP-Rule" id="MF_00739"/>
    </source>
</evidence>
<name>URE3_BLOPB</name>
<proteinExistence type="inferred from homology"/>
<feature type="chain" id="PRO_0000234199" description="Urease subunit gamma">
    <location>
        <begin position="1"/>
        <end position="100"/>
    </location>
</feature>
<accession>Q492E7</accession>
<organism>
    <name type="scientific">Blochmanniella pennsylvanica (strain BPEN)</name>
    <dbReference type="NCBI Taxonomy" id="291272"/>
    <lineage>
        <taxon>Bacteria</taxon>
        <taxon>Pseudomonadati</taxon>
        <taxon>Pseudomonadota</taxon>
        <taxon>Gammaproteobacteria</taxon>
        <taxon>Enterobacterales</taxon>
        <taxon>Enterobacteriaceae</taxon>
        <taxon>ant endosymbionts</taxon>
        <taxon>Candidatus Blochmanniella</taxon>
    </lineage>
</organism>